<keyword id="KW-0007">Acetylation</keyword>
<keyword id="KW-0158">Chromosome</keyword>
<keyword id="KW-0238">DNA-binding</keyword>
<keyword id="KW-1017">Isopeptide bond</keyword>
<keyword id="KW-0544">Nucleosome core</keyword>
<keyword id="KW-0539">Nucleus</keyword>
<keyword id="KW-1185">Reference proteome</keyword>
<keyword id="KW-0832">Ubl conjugation</keyword>
<feature type="initiator methionine" description="Removed" evidence="1">
    <location>
        <position position="1"/>
    </location>
</feature>
<feature type="chain" id="PRO_0000239423" description="Histone H2B.3">
    <location>
        <begin position="2"/>
        <end position="138"/>
    </location>
</feature>
<feature type="region of interest" description="Disordered" evidence="2">
    <location>
        <begin position="1"/>
        <end position="46"/>
    </location>
</feature>
<feature type="compositionally biased region" description="Basic and acidic residues" evidence="2">
    <location>
        <begin position="1"/>
        <end position="18"/>
    </location>
</feature>
<feature type="compositionally biased region" description="Basic and acidic residues" evidence="2">
    <location>
        <begin position="26"/>
        <end position="38"/>
    </location>
</feature>
<feature type="modified residue" description="N6-acetyllysine" evidence="1">
    <location>
        <position position="7"/>
    </location>
</feature>
<feature type="modified residue" description="N6-acetyllysine" evidence="1">
    <location>
        <position position="27"/>
    </location>
</feature>
<feature type="cross-link" description="Glycyl lysine isopeptide (Lys-Gly) (interchain with G-Cter in ubiquitin)" evidence="1">
    <location>
        <position position="134"/>
    </location>
</feature>
<sequence length="138" mass="15105">MAPKAEKKPVAEKAEKTTAAKKTKAEKRPPASKEGGDKKGKKKSKKSVETYKIYIFKVLKQVHPDIGISSKAMSIMNSFINDIFEKLAGESAKLARYNKKPTITSREIQTSVRLVLPGELAKHAVSEGTKAVTKFTSA</sequence>
<protein>
    <recommendedName>
        <fullName>Histone H2B.3</fullName>
    </recommendedName>
    <alternativeName>
        <fullName>wcH2B-8</fullName>
    </alternativeName>
</protein>
<evidence type="ECO:0000250" key="1"/>
<evidence type="ECO:0000256" key="2">
    <source>
        <dbReference type="SAM" id="MobiDB-lite"/>
    </source>
</evidence>
<evidence type="ECO:0000305" key="3"/>
<reference key="1">
    <citation type="journal article" date="1995" name="Plant Mol. Biol.">
        <title>Structural and functional characterization of two wheat histone H2B promoters.</title>
        <authorList>
            <person name="Yang P."/>
            <person name="Taoka K."/>
            <person name="Nakayma T."/>
            <person name="Iwabuchi M."/>
        </authorList>
    </citation>
    <scope>NUCLEOTIDE SEQUENCE [MRNA]</scope>
</reference>
<reference key="2">
    <citation type="journal article" date="1990" name="Plant Physiol.">
        <title>Phosphorylation of plant H2A histones.</title>
        <authorList>
            <person name="Green G.R."/>
            <person name="Gustavsen L.C."/>
            <person name="Poccia D.L."/>
        </authorList>
    </citation>
    <scope>LACK OF PHOSPHORYLATION</scope>
</reference>
<name>H2B3_WHEAT</name>
<dbReference type="EMBL" id="D37943">
    <property type="protein sequence ID" value="BAA07157.1"/>
    <property type="molecule type" value="mRNA"/>
</dbReference>
<dbReference type="PIR" id="S56685">
    <property type="entry name" value="S56685"/>
</dbReference>
<dbReference type="SMR" id="Q43217"/>
<dbReference type="STRING" id="4565.Q43217"/>
<dbReference type="PaxDb" id="4565-Traes_7DL_1FC95654F.1"/>
<dbReference type="eggNOG" id="KOG1744">
    <property type="taxonomic scope" value="Eukaryota"/>
</dbReference>
<dbReference type="Proteomes" id="UP000019116">
    <property type="component" value="Unplaced"/>
</dbReference>
<dbReference type="ExpressionAtlas" id="Q43217">
    <property type="expression patterns" value="baseline and differential"/>
</dbReference>
<dbReference type="GO" id="GO:0000786">
    <property type="term" value="C:nucleosome"/>
    <property type="evidence" value="ECO:0007669"/>
    <property type="project" value="UniProtKB-KW"/>
</dbReference>
<dbReference type="GO" id="GO:0005634">
    <property type="term" value="C:nucleus"/>
    <property type="evidence" value="ECO:0007669"/>
    <property type="project" value="UniProtKB-SubCell"/>
</dbReference>
<dbReference type="GO" id="GO:0003677">
    <property type="term" value="F:DNA binding"/>
    <property type="evidence" value="ECO:0000318"/>
    <property type="project" value="GO_Central"/>
</dbReference>
<dbReference type="GO" id="GO:0046982">
    <property type="term" value="F:protein heterodimerization activity"/>
    <property type="evidence" value="ECO:0007669"/>
    <property type="project" value="InterPro"/>
</dbReference>
<dbReference type="GO" id="GO:0030527">
    <property type="term" value="F:structural constituent of chromatin"/>
    <property type="evidence" value="ECO:0007669"/>
    <property type="project" value="InterPro"/>
</dbReference>
<dbReference type="CDD" id="cd22910">
    <property type="entry name" value="HFD_H2B"/>
    <property type="match status" value="1"/>
</dbReference>
<dbReference type="FunFam" id="1.10.20.10:FF:000014">
    <property type="entry name" value="Histone H2B"/>
    <property type="match status" value="1"/>
</dbReference>
<dbReference type="Gene3D" id="1.10.20.10">
    <property type="entry name" value="Histone, subunit A"/>
    <property type="match status" value="1"/>
</dbReference>
<dbReference type="InterPro" id="IPR009072">
    <property type="entry name" value="Histone-fold"/>
</dbReference>
<dbReference type="InterPro" id="IPR007125">
    <property type="entry name" value="Histone_H2A/H2B/H3"/>
</dbReference>
<dbReference type="InterPro" id="IPR000558">
    <property type="entry name" value="Histone_H2B"/>
</dbReference>
<dbReference type="InterPro" id="IPR055333">
    <property type="entry name" value="HISTONE_H2B_site"/>
</dbReference>
<dbReference type="PANTHER" id="PTHR23428">
    <property type="entry name" value="HISTONE H2B"/>
    <property type="match status" value="1"/>
</dbReference>
<dbReference type="Pfam" id="PF00125">
    <property type="entry name" value="Histone"/>
    <property type="match status" value="1"/>
</dbReference>
<dbReference type="PRINTS" id="PR00621">
    <property type="entry name" value="HISTONEH2B"/>
</dbReference>
<dbReference type="SMART" id="SM00427">
    <property type="entry name" value="H2B"/>
    <property type="match status" value="1"/>
</dbReference>
<dbReference type="SUPFAM" id="SSF47113">
    <property type="entry name" value="Histone-fold"/>
    <property type="match status" value="1"/>
</dbReference>
<dbReference type="PROSITE" id="PS00357">
    <property type="entry name" value="HISTONE_H2B"/>
    <property type="match status" value="1"/>
</dbReference>
<organism>
    <name type="scientific">Triticum aestivum</name>
    <name type="common">Wheat</name>
    <dbReference type="NCBI Taxonomy" id="4565"/>
    <lineage>
        <taxon>Eukaryota</taxon>
        <taxon>Viridiplantae</taxon>
        <taxon>Streptophyta</taxon>
        <taxon>Embryophyta</taxon>
        <taxon>Tracheophyta</taxon>
        <taxon>Spermatophyta</taxon>
        <taxon>Magnoliopsida</taxon>
        <taxon>Liliopsida</taxon>
        <taxon>Poales</taxon>
        <taxon>Poaceae</taxon>
        <taxon>BOP clade</taxon>
        <taxon>Pooideae</taxon>
        <taxon>Triticodae</taxon>
        <taxon>Triticeae</taxon>
        <taxon>Triticinae</taxon>
        <taxon>Triticum</taxon>
    </lineage>
</organism>
<comment type="function">
    <text>Core component of nucleosome. Nucleosomes wrap and compact DNA into chromatin, limiting DNA accessibility to the cellular machineries which require DNA as a template. Histones thereby play a central role in transcription regulation, DNA repair, DNA replication and chromosomal stability. DNA accessibility is regulated via a complex set of post-translational modifications of histones, also called histone code, and nucleosome remodeling.</text>
</comment>
<comment type="subunit">
    <text>The nucleosome is a histone octamer containing two molecules each of H2A, H2B, H3 and H4 assembled in one H3-H4 heterotetramer and two H2A-H2B heterodimers. The octamer wraps approximately 147 bp of DNA.</text>
</comment>
<comment type="subcellular location">
    <subcellularLocation>
        <location evidence="1">Nucleus</location>
    </subcellularLocation>
    <subcellularLocation>
        <location evidence="1">Chromosome</location>
    </subcellularLocation>
</comment>
<comment type="PTM">
    <text evidence="1">Can be acetylated to form H2BK6ac and H2BK33ac.</text>
</comment>
<comment type="PTM">
    <text evidence="1">Monoubiquitinated to form H2BK143ub1; may give a specific tag for epigenetic transcriptional activation.</text>
</comment>
<comment type="miscellaneous">
    <text>Phosphorylation of H2B was not detected.</text>
</comment>
<comment type="similarity">
    <text evidence="3">Belongs to the histone H2B family.</text>
</comment>
<comment type="caution">
    <text evidence="3">To ensure consistency between histone entries, we follow the 'Brno' nomenclature for histone modifications, with positions referring to those used in the literature for the 'closest' model organism. Due to slight variations in histone sequences between organisms and to the presence of initiator methionine in UniProtKB/Swiss-Prot sequences, the actual positions of modified amino acids in the sequence generally differ. In this entry the following conventions are used: H2BK6ac = acetylated Lys-7; H2BK33ac = acetylated Lys-27; H2BK143ub1 = monoubiquitinated Lys-134.</text>
</comment>
<accession>Q43217</accession>
<proteinExistence type="evidence at protein level"/>